<dbReference type="EC" id="7.1.1.2"/>
<dbReference type="EMBL" id="AJ309866">
    <property type="protein sequence ID" value="CAC37914.1"/>
    <property type="molecule type" value="Genomic_DNA"/>
</dbReference>
<dbReference type="RefSeq" id="NP_114329.1">
    <property type="nucleotide sequence ID" value="NC_002763.1"/>
</dbReference>
<dbReference type="SMR" id="Q94ZL2"/>
<dbReference type="GeneID" id="803060"/>
<dbReference type="CTD" id="4539"/>
<dbReference type="GO" id="GO:0005743">
    <property type="term" value="C:mitochondrial inner membrane"/>
    <property type="evidence" value="ECO:0000250"/>
    <property type="project" value="UniProtKB"/>
</dbReference>
<dbReference type="GO" id="GO:0045271">
    <property type="term" value="C:respiratory chain complex I"/>
    <property type="evidence" value="ECO:0000250"/>
    <property type="project" value="UniProtKB"/>
</dbReference>
<dbReference type="GO" id="GO:0008137">
    <property type="term" value="F:NADH dehydrogenase (ubiquinone) activity"/>
    <property type="evidence" value="ECO:0000250"/>
    <property type="project" value="UniProtKB"/>
</dbReference>
<dbReference type="GO" id="GO:0042773">
    <property type="term" value="P:ATP synthesis coupled electron transport"/>
    <property type="evidence" value="ECO:0007669"/>
    <property type="project" value="InterPro"/>
</dbReference>
<dbReference type="FunFam" id="1.10.287.3510:FF:000002">
    <property type="entry name" value="NADH-ubiquinone oxidoreductase chain 4L"/>
    <property type="match status" value="1"/>
</dbReference>
<dbReference type="Gene3D" id="1.10.287.3510">
    <property type="match status" value="1"/>
</dbReference>
<dbReference type="InterPro" id="IPR001133">
    <property type="entry name" value="NADH_UbQ_OxRdtase_chain4L/K"/>
</dbReference>
<dbReference type="InterPro" id="IPR039428">
    <property type="entry name" value="NUOK/Mnh_C1-like"/>
</dbReference>
<dbReference type="PANTHER" id="PTHR11434:SF0">
    <property type="entry name" value="NADH-UBIQUINONE OXIDOREDUCTASE CHAIN 4L"/>
    <property type="match status" value="1"/>
</dbReference>
<dbReference type="PANTHER" id="PTHR11434">
    <property type="entry name" value="NADH-UBIQUINONE OXIDOREDUCTASE SUBUNIT ND4L"/>
    <property type="match status" value="1"/>
</dbReference>
<dbReference type="Pfam" id="PF00420">
    <property type="entry name" value="Oxidored_q2"/>
    <property type="match status" value="1"/>
</dbReference>
<organism>
    <name type="scientific">Cebus albifrons</name>
    <name type="common">White-fronted capuchin</name>
    <dbReference type="NCBI Taxonomy" id="9514"/>
    <lineage>
        <taxon>Eukaryota</taxon>
        <taxon>Metazoa</taxon>
        <taxon>Chordata</taxon>
        <taxon>Craniata</taxon>
        <taxon>Vertebrata</taxon>
        <taxon>Euteleostomi</taxon>
        <taxon>Mammalia</taxon>
        <taxon>Eutheria</taxon>
        <taxon>Euarchontoglires</taxon>
        <taxon>Primates</taxon>
        <taxon>Haplorrhini</taxon>
        <taxon>Platyrrhini</taxon>
        <taxon>Cebidae</taxon>
        <taxon>Cebinae</taxon>
        <taxon>Cebus</taxon>
    </lineage>
</organism>
<protein>
    <recommendedName>
        <fullName>NADH-ubiquinone oxidoreductase chain 4L</fullName>
        <ecNumber>7.1.1.2</ecNumber>
    </recommendedName>
    <alternativeName>
        <fullName>NADH dehydrogenase subunit 4L</fullName>
    </alternativeName>
</protein>
<evidence type="ECO:0000250" key="1">
    <source>
        <dbReference type="UniProtKB" id="P03901"/>
    </source>
</evidence>
<evidence type="ECO:0000250" key="2">
    <source>
        <dbReference type="UniProtKB" id="P03902"/>
    </source>
</evidence>
<evidence type="ECO:0000255" key="3"/>
<evidence type="ECO:0000305" key="4"/>
<comment type="function">
    <text evidence="1">Core subunit of the mitochondrial membrane respiratory chain NADH dehydrogenase (Complex I) which catalyzes electron transfer from NADH through the respiratory chain, using ubiquinone as an electron acceptor. Part of the enzyme membrane arm which is embedded in the lipid bilayer and involved in proton translocation.</text>
</comment>
<comment type="catalytic activity">
    <reaction evidence="1">
        <text>a ubiquinone + NADH + 5 H(+)(in) = a ubiquinol + NAD(+) + 4 H(+)(out)</text>
        <dbReference type="Rhea" id="RHEA:29091"/>
        <dbReference type="Rhea" id="RHEA-COMP:9565"/>
        <dbReference type="Rhea" id="RHEA-COMP:9566"/>
        <dbReference type="ChEBI" id="CHEBI:15378"/>
        <dbReference type="ChEBI" id="CHEBI:16389"/>
        <dbReference type="ChEBI" id="CHEBI:17976"/>
        <dbReference type="ChEBI" id="CHEBI:57540"/>
        <dbReference type="ChEBI" id="CHEBI:57945"/>
        <dbReference type="EC" id="7.1.1.2"/>
    </reaction>
    <physiologicalReaction direction="left-to-right" evidence="1">
        <dbReference type="Rhea" id="RHEA:29092"/>
    </physiologicalReaction>
</comment>
<comment type="subunit">
    <text evidence="2">Core subunit of respiratory chain NADH dehydrogenase (Complex I) which is composed of 45 different subunits.</text>
</comment>
<comment type="subcellular location">
    <subcellularLocation>
        <location evidence="2">Mitochondrion inner membrane</location>
        <topology evidence="3">Multi-pass membrane protein</topology>
    </subcellularLocation>
</comment>
<comment type="similarity">
    <text evidence="4">Belongs to the complex I subunit 4L family.</text>
</comment>
<name>NU4LM_CEBAL</name>
<accession>Q94ZL2</accession>
<gene>
    <name type="primary">MT-ND4L</name>
    <name type="synonym">MTND4L</name>
    <name type="synonym">NADH4L</name>
    <name type="synonym">ND4L</name>
</gene>
<proteinExistence type="inferred from homology"/>
<sequence>MPFIYINTALAYSMSLLGLLIYRSHLMSSLLCLEGMMLSLFIMMTTMTLNMHLMLMYMLPIILLVFAACEAAVGLALLILISNLYGLDYVQNLNLLQC</sequence>
<geneLocation type="mitochondrion"/>
<feature type="chain" id="PRO_0000274988" description="NADH-ubiquinone oxidoreductase chain 4L">
    <location>
        <begin position="1"/>
        <end position="98"/>
    </location>
</feature>
<feature type="transmembrane region" description="Helical" evidence="3">
    <location>
        <begin position="1"/>
        <end position="21"/>
    </location>
</feature>
<feature type="transmembrane region" description="Helical" evidence="3">
    <location>
        <begin position="29"/>
        <end position="49"/>
    </location>
</feature>
<feature type="transmembrane region" description="Helical" evidence="3">
    <location>
        <begin position="61"/>
        <end position="81"/>
    </location>
</feature>
<reference key="1">
    <citation type="journal article" date="2000" name="Hereditas">
        <title>Molecular estimates of primate divergences and new hypotheses for primate dispersal and the origin of modern humans.</title>
        <authorList>
            <person name="Arnason U."/>
            <person name="Gullberg A."/>
            <person name="Burguete A.S."/>
            <person name="Janke A."/>
        </authorList>
    </citation>
    <scope>NUCLEOTIDE SEQUENCE [GENOMIC DNA]</scope>
</reference>
<keyword id="KW-0249">Electron transport</keyword>
<keyword id="KW-0472">Membrane</keyword>
<keyword id="KW-0496">Mitochondrion</keyword>
<keyword id="KW-0999">Mitochondrion inner membrane</keyword>
<keyword id="KW-0520">NAD</keyword>
<keyword id="KW-0679">Respiratory chain</keyword>
<keyword id="KW-1278">Translocase</keyword>
<keyword id="KW-0812">Transmembrane</keyword>
<keyword id="KW-1133">Transmembrane helix</keyword>
<keyword id="KW-0813">Transport</keyword>
<keyword id="KW-0830">Ubiquinone</keyword>